<reference key="1">
    <citation type="journal article" date="2004" name="Nucleic Acids Res.">
        <title>Genome sequence of Symbiobacterium thermophilum, an uncultivable bacterium that depends on microbial commensalism.</title>
        <authorList>
            <person name="Ueda K."/>
            <person name="Yamashita A."/>
            <person name="Ishikawa J."/>
            <person name="Shimada M."/>
            <person name="Watsuji T."/>
            <person name="Morimura K."/>
            <person name="Ikeda H."/>
            <person name="Hattori M."/>
            <person name="Beppu T."/>
        </authorList>
    </citation>
    <scope>NUCLEOTIDE SEQUENCE [LARGE SCALE GENOMIC DNA]</scope>
    <source>
        <strain>DSM 24528 / JCM 14929 / IAM 14863 / T</strain>
    </source>
</reference>
<keyword id="KW-0012">Acyltransferase</keyword>
<keyword id="KW-0133">Cell shape</keyword>
<keyword id="KW-0961">Cell wall biogenesis/degradation</keyword>
<keyword id="KW-0963">Cytoplasm</keyword>
<keyword id="KW-0460">Magnesium</keyword>
<keyword id="KW-0479">Metal-binding</keyword>
<keyword id="KW-0511">Multifunctional enzyme</keyword>
<keyword id="KW-0548">Nucleotidyltransferase</keyword>
<keyword id="KW-0573">Peptidoglycan synthesis</keyword>
<keyword id="KW-1185">Reference proteome</keyword>
<keyword id="KW-0677">Repeat</keyword>
<keyword id="KW-0808">Transferase</keyword>
<dbReference type="EC" id="2.7.7.23" evidence="1"/>
<dbReference type="EC" id="2.3.1.157" evidence="1"/>
<dbReference type="EMBL" id="AP006840">
    <property type="protein sequence ID" value="BAD42222.1"/>
    <property type="molecule type" value="Genomic_DNA"/>
</dbReference>
<dbReference type="RefSeq" id="WP_011197353.1">
    <property type="nucleotide sequence ID" value="NC_006177.1"/>
</dbReference>
<dbReference type="SMR" id="Q67JC8"/>
<dbReference type="STRING" id="292459.STH3240"/>
<dbReference type="KEGG" id="sth:STH3240"/>
<dbReference type="eggNOG" id="COG1207">
    <property type="taxonomic scope" value="Bacteria"/>
</dbReference>
<dbReference type="HOGENOM" id="CLU_029499_15_2_9"/>
<dbReference type="OrthoDB" id="9775031at2"/>
<dbReference type="UniPathway" id="UPA00113">
    <property type="reaction ID" value="UER00532"/>
</dbReference>
<dbReference type="UniPathway" id="UPA00113">
    <property type="reaction ID" value="UER00533"/>
</dbReference>
<dbReference type="UniPathway" id="UPA00973"/>
<dbReference type="Proteomes" id="UP000000417">
    <property type="component" value="Chromosome"/>
</dbReference>
<dbReference type="GO" id="GO:0005737">
    <property type="term" value="C:cytoplasm"/>
    <property type="evidence" value="ECO:0007669"/>
    <property type="project" value="UniProtKB-SubCell"/>
</dbReference>
<dbReference type="GO" id="GO:0016020">
    <property type="term" value="C:membrane"/>
    <property type="evidence" value="ECO:0007669"/>
    <property type="project" value="GOC"/>
</dbReference>
<dbReference type="GO" id="GO:0019134">
    <property type="term" value="F:glucosamine-1-phosphate N-acetyltransferase activity"/>
    <property type="evidence" value="ECO:0007669"/>
    <property type="project" value="UniProtKB-UniRule"/>
</dbReference>
<dbReference type="GO" id="GO:0000287">
    <property type="term" value="F:magnesium ion binding"/>
    <property type="evidence" value="ECO:0007669"/>
    <property type="project" value="UniProtKB-UniRule"/>
</dbReference>
<dbReference type="GO" id="GO:0003977">
    <property type="term" value="F:UDP-N-acetylglucosamine diphosphorylase activity"/>
    <property type="evidence" value="ECO:0007669"/>
    <property type="project" value="UniProtKB-UniRule"/>
</dbReference>
<dbReference type="GO" id="GO:0000902">
    <property type="term" value="P:cell morphogenesis"/>
    <property type="evidence" value="ECO:0007669"/>
    <property type="project" value="UniProtKB-UniRule"/>
</dbReference>
<dbReference type="GO" id="GO:0071555">
    <property type="term" value="P:cell wall organization"/>
    <property type="evidence" value="ECO:0007669"/>
    <property type="project" value="UniProtKB-KW"/>
</dbReference>
<dbReference type="GO" id="GO:0009245">
    <property type="term" value="P:lipid A biosynthetic process"/>
    <property type="evidence" value="ECO:0007669"/>
    <property type="project" value="UniProtKB-UniRule"/>
</dbReference>
<dbReference type="GO" id="GO:0009252">
    <property type="term" value="P:peptidoglycan biosynthetic process"/>
    <property type="evidence" value="ECO:0007669"/>
    <property type="project" value="UniProtKB-UniRule"/>
</dbReference>
<dbReference type="GO" id="GO:0008360">
    <property type="term" value="P:regulation of cell shape"/>
    <property type="evidence" value="ECO:0007669"/>
    <property type="project" value="UniProtKB-KW"/>
</dbReference>
<dbReference type="GO" id="GO:0006048">
    <property type="term" value="P:UDP-N-acetylglucosamine biosynthetic process"/>
    <property type="evidence" value="ECO:0007669"/>
    <property type="project" value="UniProtKB-UniPathway"/>
</dbReference>
<dbReference type="CDD" id="cd02540">
    <property type="entry name" value="GT2_GlmU_N_bac"/>
    <property type="match status" value="1"/>
</dbReference>
<dbReference type="CDD" id="cd03353">
    <property type="entry name" value="LbH_GlmU_C"/>
    <property type="match status" value="1"/>
</dbReference>
<dbReference type="Gene3D" id="2.160.10.10">
    <property type="entry name" value="Hexapeptide repeat proteins"/>
    <property type="match status" value="1"/>
</dbReference>
<dbReference type="Gene3D" id="3.90.550.10">
    <property type="entry name" value="Spore Coat Polysaccharide Biosynthesis Protein SpsA, Chain A"/>
    <property type="match status" value="1"/>
</dbReference>
<dbReference type="HAMAP" id="MF_01631">
    <property type="entry name" value="GlmU"/>
    <property type="match status" value="1"/>
</dbReference>
<dbReference type="InterPro" id="IPR005882">
    <property type="entry name" value="Bifunctional_GlmU"/>
</dbReference>
<dbReference type="InterPro" id="IPR050065">
    <property type="entry name" value="GlmU-like"/>
</dbReference>
<dbReference type="InterPro" id="IPR038009">
    <property type="entry name" value="GlmU_C_LbH"/>
</dbReference>
<dbReference type="InterPro" id="IPR001451">
    <property type="entry name" value="Hexapep"/>
</dbReference>
<dbReference type="InterPro" id="IPR018357">
    <property type="entry name" value="Hexapep_transf_CS"/>
</dbReference>
<dbReference type="InterPro" id="IPR025877">
    <property type="entry name" value="MobA-like_NTP_Trfase"/>
</dbReference>
<dbReference type="InterPro" id="IPR029044">
    <property type="entry name" value="Nucleotide-diphossugar_trans"/>
</dbReference>
<dbReference type="InterPro" id="IPR011004">
    <property type="entry name" value="Trimer_LpxA-like_sf"/>
</dbReference>
<dbReference type="NCBIfam" id="TIGR01173">
    <property type="entry name" value="glmU"/>
    <property type="match status" value="1"/>
</dbReference>
<dbReference type="PANTHER" id="PTHR43584:SF3">
    <property type="entry name" value="BIFUNCTIONAL PROTEIN GLMU"/>
    <property type="match status" value="1"/>
</dbReference>
<dbReference type="PANTHER" id="PTHR43584">
    <property type="entry name" value="NUCLEOTIDYL TRANSFERASE"/>
    <property type="match status" value="1"/>
</dbReference>
<dbReference type="Pfam" id="PF00132">
    <property type="entry name" value="Hexapep"/>
    <property type="match status" value="2"/>
</dbReference>
<dbReference type="Pfam" id="PF12804">
    <property type="entry name" value="NTP_transf_3"/>
    <property type="match status" value="1"/>
</dbReference>
<dbReference type="SUPFAM" id="SSF53448">
    <property type="entry name" value="Nucleotide-diphospho-sugar transferases"/>
    <property type="match status" value="1"/>
</dbReference>
<dbReference type="SUPFAM" id="SSF51161">
    <property type="entry name" value="Trimeric LpxA-like enzymes"/>
    <property type="match status" value="1"/>
</dbReference>
<dbReference type="PROSITE" id="PS00101">
    <property type="entry name" value="HEXAPEP_TRANSFERASES"/>
    <property type="match status" value="1"/>
</dbReference>
<protein>
    <recommendedName>
        <fullName evidence="1">Bifunctional protein GlmU</fullName>
    </recommendedName>
    <domain>
        <recommendedName>
            <fullName evidence="1">UDP-N-acetylglucosamine pyrophosphorylase</fullName>
            <ecNumber evidence="1">2.7.7.23</ecNumber>
        </recommendedName>
        <alternativeName>
            <fullName evidence="1">N-acetylglucosamine-1-phosphate uridyltransferase</fullName>
        </alternativeName>
    </domain>
    <domain>
        <recommendedName>
            <fullName evidence="1">Glucosamine-1-phosphate N-acetyltransferase</fullName>
            <ecNumber evidence="1">2.3.1.157</ecNumber>
        </recommendedName>
    </domain>
</protein>
<feature type="chain" id="PRO_0000233861" description="Bifunctional protein GlmU">
    <location>
        <begin position="1"/>
        <end position="471"/>
    </location>
</feature>
<feature type="region of interest" description="Pyrophosphorylase" evidence="1">
    <location>
        <begin position="1"/>
        <end position="232"/>
    </location>
</feature>
<feature type="region of interest" description="Linker" evidence="1">
    <location>
        <begin position="233"/>
        <end position="253"/>
    </location>
</feature>
<feature type="region of interest" description="N-acetyltransferase" evidence="1">
    <location>
        <begin position="254"/>
        <end position="471"/>
    </location>
</feature>
<feature type="active site" description="Proton acceptor" evidence="1">
    <location>
        <position position="365"/>
    </location>
</feature>
<feature type="binding site" evidence="1">
    <location>
        <begin position="9"/>
        <end position="12"/>
    </location>
    <ligand>
        <name>UDP-N-acetyl-alpha-D-glucosamine</name>
        <dbReference type="ChEBI" id="CHEBI:57705"/>
    </ligand>
</feature>
<feature type="binding site" evidence="1">
    <location>
        <position position="23"/>
    </location>
    <ligand>
        <name>UDP-N-acetyl-alpha-D-glucosamine</name>
        <dbReference type="ChEBI" id="CHEBI:57705"/>
    </ligand>
</feature>
<feature type="binding site" evidence="1">
    <location>
        <position position="73"/>
    </location>
    <ligand>
        <name>UDP-N-acetyl-alpha-D-glucosamine</name>
        <dbReference type="ChEBI" id="CHEBI:57705"/>
    </ligand>
</feature>
<feature type="binding site" evidence="1">
    <location>
        <begin position="78"/>
        <end position="79"/>
    </location>
    <ligand>
        <name>UDP-N-acetyl-alpha-D-glucosamine</name>
        <dbReference type="ChEBI" id="CHEBI:57705"/>
    </ligand>
</feature>
<feature type="binding site" evidence="1">
    <location>
        <begin position="102"/>
        <end position="104"/>
    </location>
    <ligand>
        <name>UDP-N-acetyl-alpha-D-glucosamine</name>
        <dbReference type="ChEBI" id="CHEBI:57705"/>
    </ligand>
</feature>
<feature type="binding site" evidence="1">
    <location>
        <position position="104"/>
    </location>
    <ligand>
        <name>Mg(2+)</name>
        <dbReference type="ChEBI" id="CHEBI:18420"/>
    </ligand>
</feature>
<feature type="binding site" evidence="1">
    <location>
        <position position="141"/>
    </location>
    <ligand>
        <name>UDP-N-acetyl-alpha-D-glucosamine</name>
        <dbReference type="ChEBI" id="CHEBI:57705"/>
    </ligand>
</feature>
<feature type="binding site" evidence="1">
    <location>
        <position position="157"/>
    </location>
    <ligand>
        <name>UDP-N-acetyl-alpha-D-glucosamine</name>
        <dbReference type="ChEBI" id="CHEBI:57705"/>
    </ligand>
</feature>
<feature type="binding site" evidence="1">
    <location>
        <position position="230"/>
    </location>
    <ligand>
        <name>Mg(2+)</name>
        <dbReference type="ChEBI" id="CHEBI:18420"/>
    </ligand>
</feature>
<feature type="binding site" evidence="1">
    <location>
        <position position="230"/>
    </location>
    <ligand>
        <name>UDP-N-acetyl-alpha-D-glucosamine</name>
        <dbReference type="ChEBI" id="CHEBI:57705"/>
    </ligand>
</feature>
<feature type="binding site" evidence="1">
    <location>
        <position position="335"/>
    </location>
    <ligand>
        <name>UDP-N-acetyl-alpha-D-glucosamine</name>
        <dbReference type="ChEBI" id="CHEBI:57705"/>
    </ligand>
</feature>
<feature type="binding site" evidence="1">
    <location>
        <position position="353"/>
    </location>
    <ligand>
        <name>UDP-N-acetyl-alpha-D-glucosamine</name>
        <dbReference type="ChEBI" id="CHEBI:57705"/>
    </ligand>
</feature>
<feature type="binding site" evidence="1">
    <location>
        <position position="368"/>
    </location>
    <ligand>
        <name>UDP-N-acetyl-alpha-D-glucosamine</name>
        <dbReference type="ChEBI" id="CHEBI:57705"/>
    </ligand>
</feature>
<feature type="binding site" evidence="1">
    <location>
        <position position="379"/>
    </location>
    <ligand>
        <name>UDP-N-acetyl-alpha-D-glucosamine</name>
        <dbReference type="ChEBI" id="CHEBI:57705"/>
    </ligand>
</feature>
<feature type="binding site" evidence="1">
    <location>
        <position position="382"/>
    </location>
    <ligand>
        <name>acetyl-CoA</name>
        <dbReference type="ChEBI" id="CHEBI:57288"/>
    </ligand>
</feature>
<feature type="binding site" evidence="1">
    <location>
        <begin position="388"/>
        <end position="389"/>
    </location>
    <ligand>
        <name>acetyl-CoA</name>
        <dbReference type="ChEBI" id="CHEBI:57288"/>
    </ligand>
</feature>
<feature type="binding site" evidence="1">
    <location>
        <position position="425"/>
    </location>
    <ligand>
        <name>acetyl-CoA</name>
        <dbReference type="ChEBI" id="CHEBI:57288"/>
    </ligand>
</feature>
<feature type="binding site" evidence="1">
    <location>
        <position position="444"/>
    </location>
    <ligand>
        <name>acetyl-CoA</name>
        <dbReference type="ChEBI" id="CHEBI:57288"/>
    </ligand>
</feature>
<gene>
    <name evidence="1" type="primary">glmU</name>
    <name type="ordered locus">STH3240</name>
</gene>
<comment type="function">
    <text evidence="1">Catalyzes the last two sequential reactions in the de novo biosynthetic pathway for UDP-N-acetylglucosamine (UDP-GlcNAc). The C-terminal domain catalyzes the transfer of acetyl group from acetyl coenzyme A to glucosamine-1-phosphate (GlcN-1-P) to produce N-acetylglucosamine-1-phosphate (GlcNAc-1-P), which is converted into UDP-GlcNAc by the transfer of uridine 5-monophosphate (from uridine 5-triphosphate), a reaction catalyzed by the N-terminal domain.</text>
</comment>
<comment type="catalytic activity">
    <reaction evidence="1">
        <text>alpha-D-glucosamine 1-phosphate + acetyl-CoA = N-acetyl-alpha-D-glucosamine 1-phosphate + CoA + H(+)</text>
        <dbReference type="Rhea" id="RHEA:13725"/>
        <dbReference type="ChEBI" id="CHEBI:15378"/>
        <dbReference type="ChEBI" id="CHEBI:57287"/>
        <dbReference type="ChEBI" id="CHEBI:57288"/>
        <dbReference type="ChEBI" id="CHEBI:57776"/>
        <dbReference type="ChEBI" id="CHEBI:58516"/>
        <dbReference type="EC" id="2.3.1.157"/>
    </reaction>
</comment>
<comment type="catalytic activity">
    <reaction evidence="1">
        <text>N-acetyl-alpha-D-glucosamine 1-phosphate + UTP + H(+) = UDP-N-acetyl-alpha-D-glucosamine + diphosphate</text>
        <dbReference type="Rhea" id="RHEA:13509"/>
        <dbReference type="ChEBI" id="CHEBI:15378"/>
        <dbReference type="ChEBI" id="CHEBI:33019"/>
        <dbReference type="ChEBI" id="CHEBI:46398"/>
        <dbReference type="ChEBI" id="CHEBI:57705"/>
        <dbReference type="ChEBI" id="CHEBI:57776"/>
        <dbReference type="EC" id="2.7.7.23"/>
    </reaction>
</comment>
<comment type="cofactor">
    <cofactor evidence="1">
        <name>Mg(2+)</name>
        <dbReference type="ChEBI" id="CHEBI:18420"/>
    </cofactor>
    <text evidence="1">Binds 1 Mg(2+) ion per subunit.</text>
</comment>
<comment type="pathway">
    <text evidence="1">Nucleotide-sugar biosynthesis; UDP-N-acetyl-alpha-D-glucosamine biosynthesis; N-acetyl-alpha-D-glucosamine 1-phosphate from alpha-D-glucosamine 6-phosphate (route II): step 2/2.</text>
</comment>
<comment type="pathway">
    <text evidence="1">Nucleotide-sugar biosynthesis; UDP-N-acetyl-alpha-D-glucosamine biosynthesis; UDP-N-acetyl-alpha-D-glucosamine from N-acetyl-alpha-D-glucosamine 1-phosphate: step 1/1.</text>
</comment>
<comment type="pathway">
    <text evidence="1">Bacterial outer membrane biogenesis; LPS lipid A biosynthesis.</text>
</comment>
<comment type="subunit">
    <text evidence="1">Homotrimer.</text>
</comment>
<comment type="subcellular location">
    <subcellularLocation>
        <location evidence="1">Cytoplasm</location>
    </subcellularLocation>
</comment>
<comment type="similarity">
    <text evidence="1">In the N-terminal section; belongs to the N-acetylglucosamine-1-phosphate uridyltransferase family.</text>
</comment>
<comment type="similarity">
    <text evidence="1">In the C-terminal section; belongs to the transferase hexapeptide repeat family.</text>
</comment>
<name>GLMU_SYMTH</name>
<proteinExistence type="inferred from homology"/>
<sequence>MSDITAVLLAAGHGTRMKSDLIKVMHPLAGKPMIGHIVDNVRRAGLEDIVVVVGYQQERIREYLGDRVRYAVQSEQLGTGHAVLQAAGLIDETEGGHVLVMYGDNPFIGPELIERLIRAHVEADAAASLLTAELADPGALGRILRDPATGAFLGSVEYKDATPEQRRIREIWTGVAVFRRAGFTALLNRLDRNNAQGEYYLPQVWEILLQRGEKVQALLLASEEDALAPNDRVELARAEARLRRQINERHMRNGVTIINPDATYIDEDVEIGRDTVIWPFTFIHGKTVIGPHCKIGPMTTIVSSTVAEGCVVEQSVVEESYVGPGCRIGPMAHLRPGCELEGAAEIGNYAELKKAKVGRGVKCHHHSYLGDATIGAGANIGAGTITANYNGVEKFRTEIGSGAFIGTNVNLIAPITVGDGALIAAGSTVGPRLEIPADALVVERAQAVIKEGRAASLKEAWRQRKMNREGT</sequence>
<accession>Q67JC8</accession>
<evidence type="ECO:0000255" key="1">
    <source>
        <dbReference type="HAMAP-Rule" id="MF_01631"/>
    </source>
</evidence>
<organism>
    <name type="scientific">Symbiobacterium thermophilum (strain DSM 24528 / JCM 14929 / IAM 14863 / T)</name>
    <dbReference type="NCBI Taxonomy" id="292459"/>
    <lineage>
        <taxon>Bacteria</taxon>
        <taxon>Bacillati</taxon>
        <taxon>Bacillota</taxon>
        <taxon>Clostridia</taxon>
        <taxon>Eubacteriales</taxon>
        <taxon>Symbiobacteriaceae</taxon>
        <taxon>Symbiobacterium</taxon>
    </lineage>
</organism>